<evidence type="ECO:0000255" key="1">
    <source>
        <dbReference type="HAMAP-Rule" id="MF_00660"/>
    </source>
</evidence>
<evidence type="ECO:0000255" key="2">
    <source>
        <dbReference type="PROSITE-ProRule" id="PRU01266"/>
    </source>
</evidence>
<feature type="chain" id="PRO_1000147579" description="PqqA peptide cyclase">
    <location>
        <begin position="1"/>
        <end position="373"/>
    </location>
</feature>
<feature type="domain" description="Radical SAM core" evidence="2">
    <location>
        <begin position="7"/>
        <end position="227"/>
    </location>
</feature>
<feature type="binding site" evidence="1">
    <location>
        <position position="21"/>
    </location>
    <ligand>
        <name>[4Fe-4S] cluster</name>
        <dbReference type="ChEBI" id="CHEBI:49883"/>
        <note>4Fe-4S-S-AdoMet</note>
    </ligand>
</feature>
<feature type="binding site" evidence="1">
    <location>
        <position position="25"/>
    </location>
    <ligand>
        <name>[4Fe-4S] cluster</name>
        <dbReference type="ChEBI" id="CHEBI:49883"/>
        <note>4Fe-4S-S-AdoMet</note>
    </ligand>
</feature>
<feature type="binding site" evidence="1">
    <location>
        <position position="28"/>
    </location>
    <ligand>
        <name>[4Fe-4S] cluster</name>
        <dbReference type="ChEBI" id="CHEBI:49883"/>
        <note>4Fe-4S-S-AdoMet</note>
    </ligand>
</feature>
<gene>
    <name evidence="1" type="primary">pqqE</name>
    <name type="ordered locus">Msil_1151</name>
</gene>
<sequence>MNAPVKILNPVGLLAELTHRCPLACPYCSNPLELDSRAAELDTAAWIKVFTEAAELGVLHAHLSGGEPAARRDLVEIVAHCASVGLYTNLITSGIGLTQERIKALADAGLDHVQLSIQDAEAKSADHIAGYEGAFARKQSVAAWVTAAGLPLTVNAVIHRANAERAGQMVKLAVALGARRVEIAHTQYYGWGIVNRAALMPTKAQADAAIAEVEALREVYAGVIVIDHVIPDYHARHPKACMGGWAKRTLNVTPTGKVLPCHAAETIPGLEFWNVRDHSLRDVWFASPAFNAFRGTEWMKEPCRSCPRKEIDFGGCRCQAFALTGDANAADPVCHLSPDHDKVAAIAAHANEEEAATEIAYVYRGVKAPVPAE</sequence>
<dbReference type="EC" id="1.21.98.4" evidence="1"/>
<dbReference type="EMBL" id="CP001280">
    <property type="protein sequence ID" value="ACK50120.1"/>
    <property type="molecule type" value="Genomic_DNA"/>
</dbReference>
<dbReference type="RefSeq" id="WP_012590190.1">
    <property type="nucleotide sequence ID" value="NC_011666.1"/>
</dbReference>
<dbReference type="SMR" id="B8ENI9"/>
<dbReference type="STRING" id="395965.Msil_1151"/>
<dbReference type="KEGG" id="msl:Msil_1151"/>
<dbReference type="eggNOG" id="COG0535">
    <property type="taxonomic scope" value="Bacteria"/>
</dbReference>
<dbReference type="HOGENOM" id="CLU_009273_4_7_5"/>
<dbReference type="OrthoDB" id="9792276at2"/>
<dbReference type="UniPathway" id="UPA00539"/>
<dbReference type="Proteomes" id="UP000002257">
    <property type="component" value="Chromosome"/>
</dbReference>
<dbReference type="GO" id="GO:0051539">
    <property type="term" value="F:4 iron, 4 sulfur cluster binding"/>
    <property type="evidence" value="ECO:0007669"/>
    <property type="project" value="UniProtKB-KW"/>
</dbReference>
<dbReference type="GO" id="GO:0009975">
    <property type="term" value="F:cyclase activity"/>
    <property type="evidence" value="ECO:0007669"/>
    <property type="project" value="UniProtKB-UniRule"/>
</dbReference>
<dbReference type="GO" id="GO:0005506">
    <property type="term" value="F:iron ion binding"/>
    <property type="evidence" value="ECO:0007669"/>
    <property type="project" value="UniProtKB-UniRule"/>
</dbReference>
<dbReference type="GO" id="GO:0016491">
    <property type="term" value="F:oxidoreductase activity"/>
    <property type="evidence" value="ECO:0007669"/>
    <property type="project" value="UniProtKB-KW"/>
</dbReference>
<dbReference type="GO" id="GO:1904047">
    <property type="term" value="F:S-adenosyl-L-methionine binding"/>
    <property type="evidence" value="ECO:0007669"/>
    <property type="project" value="UniProtKB-UniRule"/>
</dbReference>
<dbReference type="GO" id="GO:0018189">
    <property type="term" value="P:pyrroloquinoline quinone biosynthetic process"/>
    <property type="evidence" value="ECO:0007669"/>
    <property type="project" value="UniProtKB-UniRule"/>
</dbReference>
<dbReference type="CDD" id="cd01335">
    <property type="entry name" value="Radical_SAM"/>
    <property type="match status" value="1"/>
</dbReference>
<dbReference type="CDD" id="cd21119">
    <property type="entry name" value="SPASM_PqqE"/>
    <property type="match status" value="1"/>
</dbReference>
<dbReference type="Gene3D" id="3.20.20.70">
    <property type="entry name" value="Aldolase class I"/>
    <property type="match status" value="1"/>
</dbReference>
<dbReference type="HAMAP" id="MF_00660">
    <property type="entry name" value="PqqE"/>
    <property type="match status" value="1"/>
</dbReference>
<dbReference type="InterPro" id="IPR023885">
    <property type="entry name" value="4Fe4S-binding_SPASM_dom"/>
</dbReference>
<dbReference type="InterPro" id="IPR013785">
    <property type="entry name" value="Aldolase_TIM"/>
</dbReference>
<dbReference type="InterPro" id="IPR011843">
    <property type="entry name" value="PQQ_synth_PqqE_bac"/>
</dbReference>
<dbReference type="InterPro" id="IPR017200">
    <property type="entry name" value="PqqE-like"/>
</dbReference>
<dbReference type="InterPro" id="IPR050377">
    <property type="entry name" value="Radical_SAM_PqqE_MftC-like"/>
</dbReference>
<dbReference type="InterPro" id="IPR007197">
    <property type="entry name" value="rSAM"/>
</dbReference>
<dbReference type="NCBIfam" id="TIGR02109">
    <property type="entry name" value="PQQ_syn_pqqE"/>
    <property type="match status" value="1"/>
</dbReference>
<dbReference type="NCBIfam" id="TIGR04085">
    <property type="entry name" value="rSAM_more_4Fe4S"/>
    <property type="match status" value="1"/>
</dbReference>
<dbReference type="PANTHER" id="PTHR11228:SF7">
    <property type="entry name" value="PQQA PEPTIDE CYCLASE"/>
    <property type="match status" value="1"/>
</dbReference>
<dbReference type="PANTHER" id="PTHR11228">
    <property type="entry name" value="RADICAL SAM DOMAIN PROTEIN"/>
    <property type="match status" value="1"/>
</dbReference>
<dbReference type="Pfam" id="PF04055">
    <property type="entry name" value="Radical_SAM"/>
    <property type="match status" value="1"/>
</dbReference>
<dbReference type="Pfam" id="PF13186">
    <property type="entry name" value="SPASM"/>
    <property type="match status" value="1"/>
</dbReference>
<dbReference type="PIRSF" id="PIRSF037420">
    <property type="entry name" value="PQQ_syn_pqqE"/>
    <property type="match status" value="1"/>
</dbReference>
<dbReference type="SFLD" id="SFLDF00280">
    <property type="entry name" value="coenzyme_PQQ_synthesis_protein"/>
    <property type="match status" value="1"/>
</dbReference>
<dbReference type="SFLD" id="SFLDG01067">
    <property type="entry name" value="SPASM/twitch_domain_containing"/>
    <property type="match status" value="1"/>
</dbReference>
<dbReference type="SUPFAM" id="SSF102114">
    <property type="entry name" value="Radical SAM enzymes"/>
    <property type="match status" value="1"/>
</dbReference>
<dbReference type="PROSITE" id="PS51918">
    <property type="entry name" value="RADICAL_SAM"/>
    <property type="match status" value="1"/>
</dbReference>
<reference key="1">
    <citation type="journal article" date="2010" name="J. Bacteriol.">
        <title>Complete genome sequence of the aerobic facultative methanotroph Methylocella silvestris BL2.</title>
        <authorList>
            <person name="Chen Y."/>
            <person name="Crombie A."/>
            <person name="Rahman M.T."/>
            <person name="Dedysh S.N."/>
            <person name="Liesack W."/>
            <person name="Stott M.B."/>
            <person name="Alam M."/>
            <person name="Theisen A.R."/>
            <person name="Murrell J.C."/>
            <person name="Dunfield P.F."/>
        </authorList>
    </citation>
    <scope>NUCLEOTIDE SEQUENCE [LARGE SCALE GENOMIC DNA]</scope>
    <source>
        <strain>DSM 15510 / CIP 108128 / LMG 27833 / NCIMB 13906 / BL2</strain>
    </source>
</reference>
<keyword id="KW-0004">4Fe-4S</keyword>
<keyword id="KW-0408">Iron</keyword>
<keyword id="KW-0411">Iron-sulfur</keyword>
<keyword id="KW-0479">Metal-binding</keyword>
<keyword id="KW-0560">Oxidoreductase</keyword>
<keyword id="KW-0884">PQQ biosynthesis</keyword>
<keyword id="KW-1185">Reference proteome</keyword>
<keyword id="KW-0949">S-adenosyl-L-methionine</keyword>
<protein>
    <recommendedName>
        <fullName evidence="1">PqqA peptide cyclase</fullName>
        <ecNumber evidence="1">1.21.98.4</ecNumber>
    </recommendedName>
    <alternativeName>
        <fullName evidence="1">Coenzyme PQQ synthesis protein E</fullName>
    </alternativeName>
    <alternativeName>
        <fullName evidence="1">Pyrroloquinoline quinone biosynthesis protein E</fullName>
    </alternativeName>
</protein>
<name>PQQE_METSB</name>
<organism>
    <name type="scientific">Methylocella silvestris (strain DSM 15510 / CIP 108128 / LMG 27833 / NCIMB 13906 / BL2)</name>
    <dbReference type="NCBI Taxonomy" id="395965"/>
    <lineage>
        <taxon>Bacteria</taxon>
        <taxon>Pseudomonadati</taxon>
        <taxon>Pseudomonadota</taxon>
        <taxon>Alphaproteobacteria</taxon>
        <taxon>Hyphomicrobiales</taxon>
        <taxon>Beijerinckiaceae</taxon>
        <taxon>Methylocella</taxon>
    </lineage>
</organism>
<comment type="function">
    <text evidence="1">Catalyzes the cross-linking of a glutamate residue and a tyrosine residue in the PqqA protein as part of the biosynthesis of pyrroloquinoline quinone (PQQ).</text>
</comment>
<comment type="catalytic activity">
    <reaction evidence="1">
        <text>[PQQ precursor protein] + S-adenosyl-L-methionine = E-Y cross-linked-[PQQ precursor protein] + 5'-deoxyadenosine + L-methionine + H(+)</text>
        <dbReference type="Rhea" id="RHEA:56836"/>
        <dbReference type="Rhea" id="RHEA-COMP:14800"/>
        <dbReference type="Rhea" id="RHEA-COMP:14801"/>
        <dbReference type="ChEBI" id="CHEBI:15378"/>
        <dbReference type="ChEBI" id="CHEBI:17319"/>
        <dbReference type="ChEBI" id="CHEBI:57844"/>
        <dbReference type="ChEBI" id="CHEBI:59789"/>
        <dbReference type="ChEBI" id="CHEBI:141026"/>
        <dbReference type="ChEBI" id="CHEBI:141027"/>
        <dbReference type="EC" id="1.21.98.4"/>
    </reaction>
</comment>
<comment type="cofactor">
    <cofactor evidence="1">
        <name>[4Fe-4S] cluster</name>
        <dbReference type="ChEBI" id="CHEBI:49883"/>
    </cofactor>
    <text evidence="1">Binds 1 [4Fe-4S] cluster. The cluster is coordinated with 3 cysteines and an exchangeable S-adenosyl-L-methionine.</text>
</comment>
<comment type="pathway">
    <text evidence="1">Cofactor biosynthesis; pyrroloquinoline quinone biosynthesis.</text>
</comment>
<comment type="subunit">
    <text evidence="1">Interacts with PqqD. The interaction is necessary for activity of PqqE.</text>
</comment>
<comment type="similarity">
    <text evidence="1">Belongs to the radical SAM superfamily. PqqE family.</text>
</comment>
<proteinExistence type="inferred from homology"/>
<accession>B8ENI9</accession>